<organism>
    <name type="scientific">Francisella tularensis subsp. tularensis (strain FSC 198)</name>
    <dbReference type="NCBI Taxonomy" id="393115"/>
    <lineage>
        <taxon>Bacteria</taxon>
        <taxon>Pseudomonadati</taxon>
        <taxon>Pseudomonadota</taxon>
        <taxon>Gammaproteobacteria</taxon>
        <taxon>Thiotrichales</taxon>
        <taxon>Francisellaceae</taxon>
        <taxon>Francisella</taxon>
    </lineage>
</organism>
<dbReference type="EMBL" id="AM286280">
    <property type="protein sequence ID" value="CAL09078.1"/>
    <property type="molecule type" value="Genomic_DNA"/>
</dbReference>
<dbReference type="RefSeq" id="WP_003015897.1">
    <property type="nucleotide sequence ID" value="NC_008245.1"/>
</dbReference>
<dbReference type="SMR" id="Q14HF1"/>
<dbReference type="KEGG" id="ftf:FTF1062c"/>
<dbReference type="HOGENOM" id="CLU_113441_6_1_6"/>
<dbReference type="GO" id="GO:0022627">
    <property type="term" value="C:cytosolic small ribosomal subunit"/>
    <property type="evidence" value="ECO:0007669"/>
    <property type="project" value="TreeGrafter"/>
</dbReference>
<dbReference type="GO" id="GO:0070181">
    <property type="term" value="F:small ribosomal subunit rRNA binding"/>
    <property type="evidence" value="ECO:0007669"/>
    <property type="project" value="TreeGrafter"/>
</dbReference>
<dbReference type="GO" id="GO:0003735">
    <property type="term" value="F:structural constituent of ribosome"/>
    <property type="evidence" value="ECO:0007669"/>
    <property type="project" value="InterPro"/>
</dbReference>
<dbReference type="GO" id="GO:0006412">
    <property type="term" value="P:translation"/>
    <property type="evidence" value="ECO:0007669"/>
    <property type="project" value="UniProtKB-UniRule"/>
</dbReference>
<dbReference type="CDD" id="cd00473">
    <property type="entry name" value="bS6"/>
    <property type="match status" value="1"/>
</dbReference>
<dbReference type="Gene3D" id="3.30.70.60">
    <property type="match status" value="1"/>
</dbReference>
<dbReference type="HAMAP" id="MF_00360">
    <property type="entry name" value="Ribosomal_bS6"/>
    <property type="match status" value="1"/>
</dbReference>
<dbReference type="InterPro" id="IPR000529">
    <property type="entry name" value="Ribosomal_bS6"/>
</dbReference>
<dbReference type="InterPro" id="IPR035980">
    <property type="entry name" value="Ribosomal_bS6_sf"/>
</dbReference>
<dbReference type="InterPro" id="IPR020814">
    <property type="entry name" value="Ribosomal_S6_plastid/chlpt"/>
</dbReference>
<dbReference type="InterPro" id="IPR014717">
    <property type="entry name" value="Transl_elong_EF1B/ribsomal_bS6"/>
</dbReference>
<dbReference type="NCBIfam" id="TIGR00166">
    <property type="entry name" value="S6"/>
    <property type="match status" value="1"/>
</dbReference>
<dbReference type="PANTHER" id="PTHR21011">
    <property type="entry name" value="MITOCHONDRIAL 28S RIBOSOMAL PROTEIN S6"/>
    <property type="match status" value="1"/>
</dbReference>
<dbReference type="PANTHER" id="PTHR21011:SF1">
    <property type="entry name" value="SMALL RIBOSOMAL SUBUNIT PROTEIN BS6M"/>
    <property type="match status" value="1"/>
</dbReference>
<dbReference type="Pfam" id="PF01250">
    <property type="entry name" value="Ribosomal_S6"/>
    <property type="match status" value="1"/>
</dbReference>
<dbReference type="SUPFAM" id="SSF54995">
    <property type="entry name" value="Ribosomal protein S6"/>
    <property type="match status" value="1"/>
</dbReference>
<evidence type="ECO:0000255" key="1">
    <source>
        <dbReference type="HAMAP-Rule" id="MF_00360"/>
    </source>
</evidence>
<evidence type="ECO:0000305" key="2"/>
<protein>
    <recommendedName>
        <fullName evidence="1">Small ribosomal subunit protein bS6</fullName>
    </recommendedName>
    <alternativeName>
        <fullName evidence="2">30S ribosomal protein S6</fullName>
    </alternativeName>
</protein>
<accession>Q14HF1</accession>
<gene>
    <name evidence="1" type="primary">rpsF</name>
    <name type="ordered locus">FTF1062c</name>
</gene>
<proteinExistence type="inferred from homology"/>
<comment type="function">
    <text evidence="1">Binds together with bS18 to 16S ribosomal RNA.</text>
</comment>
<comment type="similarity">
    <text evidence="1">Belongs to the bacterial ribosomal protein bS6 family.</text>
</comment>
<name>RS6_FRAT1</name>
<feature type="chain" id="PRO_1000005263" description="Small ribosomal subunit protein bS6">
    <location>
        <begin position="1"/>
        <end position="111"/>
    </location>
</feature>
<sequence length="111" mass="13054">MKHYEVVLMIHPDQSDQLDAMLGKYRGIIEEKGGKIHRFEDWGRRQLAYPIEKLHKAHYVLFNIECPTESLEKLQESLRYNDAILRRLVIATKEAITEPSVMMESNEKEVI</sequence>
<keyword id="KW-0687">Ribonucleoprotein</keyword>
<keyword id="KW-0689">Ribosomal protein</keyword>
<keyword id="KW-0694">RNA-binding</keyword>
<keyword id="KW-0699">rRNA-binding</keyword>
<reference key="1">
    <citation type="journal article" date="2007" name="PLoS ONE">
        <title>Genome sequencing shows that European isolates of Francisella tularensis subspecies tularensis are almost identical to US laboratory strain Schu S4.</title>
        <authorList>
            <person name="Chaudhuri R.R."/>
            <person name="Ren C.-P."/>
            <person name="Desmond L."/>
            <person name="Vincent G.A."/>
            <person name="Silman N.J."/>
            <person name="Brehm J.K."/>
            <person name="Elmore M.J."/>
            <person name="Hudson M.J."/>
            <person name="Forsman M."/>
            <person name="Isherwood K.E."/>
            <person name="Gurycova D."/>
            <person name="Minton N.P."/>
            <person name="Titball R.W."/>
            <person name="Pallen M.J."/>
            <person name="Vipond R."/>
        </authorList>
    </citation>
    <scope>NUCLEOTIDE SEQUENCE [LARGE SCALE GENOMIC DNA]</scope>
    <source>
        <strain>FSC 198</strain>
    </source>
</reference>